<name>GLL14_CHICK</name>
<gene>
    <name type="primary">GAL14</name>
</gene>
<proteinExistence type="inferred from homology"/>
<keyword id="KW-0044">Antibiotic</keyword>
<keyword id="KW-0929">Antimicrobial</keyword>
<keyword id="KW-0211">Defensin</keyword>
<keyword id="KW-1015">Disulfide bond</keyword>
<keyword id="KW-1185">Reference proteome</keyword>
<keyword id="KW-0964">Secreted</keyword>
<keyword id="KW-0732">Signal</keyword>
<accession>Q0E4V3</accession>
<dbReference type="EMBL" id="AM402953">
    <property type="protein sequence ID" value="CAL47019.1"/>
    <property type="molecule type" value="Genomic_DNA"/>
</dbReference>
<dbReference type="EMBL" id="AM402954">
    <property type="protein sequence ID" value="CAL47020.1"/>
    <property type="molecule type" value="mRNA"/>
</dbReference>
<dbReference type="SMR" id="Q0E4V3"/>
<dbReference type="FunCoup" id="Q0E4V3">
    <property type="interactions" value="13"/>
</dbReference>
<dbReference type="STRING" id="9031.ENSGALP00000065372"/>
<dbReference type="PaxDb" id="9031-ENSGALP00000042283"/>
<dbReference type="VEuPathDB" id="HostDB:geneid_100858701"/>
<dbReference type="eggNOG" id="ENOG502TBJP">
    <property type="taxonomic scope" value="Eukaryota"/>
</dbReference>
<dbReference type="HOGENOM" id="CLU_189296_5_1_1"/>
<dbReference type="InParanoid" id="Q0E4V3"/>
<dbReference type="PhylomeDB" id="Q0E4V3"/>
<dbReference type="Proteomes" id="UP000000539">
    <property type="component" value="Unassembled WGS sequence"/>
</dbReference>
<dbReference type="GO" id="GO:0005615">
    <property type="term" value="C:extracellular space"/>
    <property type="evidence" value="ECO:0000318"/>
    <property type="project" value="GO_Central"/>
</dbReference>
<dbReference type="GO" id="GO:0031731">
    <property type="term" value="F:CCR6 chemokine receptor binding"/>
    <property type="evidence" value="ECO:0000318"/>
    <property type="project" value="GO_Central"/>
</dbReference>
<dbReference type="GO" id="GO:0050829">
    <property type="term" value="P:defense response to Gram-negative bacterium"/>
    <property type="evidence" value="ECO:0000318"/>
    <property type="project" value="GO_Central"/>
</dbReference>
<dbReference type="GO" id="GO:0050830">
    <property type="term" value="P:defense response to Gram-positive bacterium"/>
    <property type="evidence" value="ECO:0000318"/>
    <property type="project" value="GO_Central"/>
</dbReference>
<dbReference type="GO" id="GO:0002227">
    <property type="term" value="P:innate immune response in mucosa"/>
    <property type="evidence" value="ECO:0000318"/>
    <property type="project" value="GO_Central"/>
</dbReference>
<dbReference type="Gene3D" id="3.10.360.10">
    <property type="entry name" value="Antimicrobial Peptide, Beta-defensin 2, Chain A"/>
    <property type="match status" value="1"/>
</dbReference>
<dbReference type="InterPro" id="IPR001855">
    <property type="entry name" value="Defensin_beta-like"/>
</dbReference>
<dbReference type="PANTHER" id="PTHR21388:SF9">
    <property type="entry name" value="BETA-DEFENSIN 1"/>
    <property type="match status" value="1"/>
</dbReference>
<dbReference type="PANTHER" id="PTHR21388">
    <property type="entry name" value="BETA-DEFENSIN-RELATED"/>
    <property type="match status" value="1"/>
</dbReference>
<dbReference type="Pfam" id="PF00711">
    <property type="entry name" value="Defensin_beta"/>
    <property type="match status" value="1"/>
</dbReference>
<dbReference type="SUPFAM" id="SSF57392">
    <property type="entry name" value="Defensin-like"/>
    <property type="match status" value="1"/>
</dbReference>
<protein>
    <recommendedName>
        <fullName>Gallinacin-14</fullName>
        <shortName>Gal-14</shortName>
    </recommendedName>
    <alternativeName>
        <fullName>Beta-defensin 14</fullName>
    </alternativeName>
</protein>
<evidence type="ECO:0000250" key="1"/>
<evidence type="ECO:0000255" key="2"/>
<evidence type="ECO:0000305" key="3"/>
<sequence>MGIFLLFLVLLAVPQAAPESDTVTCRKMKGKCSFLLCPFFKRSSGTCYNGLAKCCRPFW</sequence>
<reference key="1">
    <citation type="submission" date="2006-09" db="EMBL/GenBank/DDBJ databases">
        <title>A novel chicken beta-defensin, gallinacin 14.</title>
        <authorList>
            <person name="Soulier A.J."/>
            <person name="Rothwell L."/>
            <person name="Lovell M.A."/>
            <person name="Bumstead N."/>
            <person name="Barrow P.A."/>
            <person name="Kaiser P."/>
        </authorList>
    </citation>
    <scope>NUCLEOTIDE SEQUENCE [GENOMIC DNA / MRNA]</scope>
</reference>
<feature type="signal peptide" evidence="2">
    <location>
        <begin position="1"/>
        <end position="18"/>
    </location>
</feature>
<feature type="chain" id="PRO_0000288578" description="Gallinacin-14">
    <location>
        <begin position="19"/>
        <end position="59"/>
    </location>
</feature>
<feature type="disulfide bond" evidence="1">
    <location>
        <begin position="25"/>
        <end position="54"/>
    </location>
</feature>
<feature type="disulfide bond" evidence="1">
    <location>
        <begin position="32"/>
        <end position="47"/>
    </location>
</feature>
<feature type="disulfide bond" evidence="1">
    <location>
        <begin position="37"/>
        <end position="55"/>
    </location>
</feature>
<comment type="function">
    <text evidence="1">Has bactericidal activity.</text>
</comment>
<comment type="subcellular location">
    <subcellularLocation>
        <location>Secreted</location>
    </subcellularLocation>
    <subcellularLocation>
        <location evidence="1">Cytoplasmic granule</location>
    </subcellularLocation>
</comment>
<comment type="similarity">
    <text evidence="3">Belongs to the beta-defensin family.</text>
</comment>
<organism>
    <name type="scientific">Gallus gallus</name>
    <name type="common">Chicken</name>
    <dbReference type="NCBI Taxonomy" id="9031"/>
    <lineage>
        <taxon>Eukaryota</taxon>
        <taxon>Metazoa</taxon>
        <taxon>Chordata</taxon>
        <taxon>Craniata</taxon>
        <taxon>Vertebrata</taxon>
        <taxon>Euteleostomi</taxon>
        <taxon>Archelosauria</taxon>
        <taxon>Archosauria</taxon>
        <taxon>Dinosauria</taxon>
        <taxon>Saurischia</taxon>
        <taxon>Theropoda</taxon>
        <taxon>Coelurosauria</taxon>
        <taxon>Aves</taxon>
        <taxon>Neognathae</taxon>
        <taxon>Galloanserae</taxon>
        <taxon>Galliformes</taxon>
        <taxon>Phasianidae</taxon>
        <taxon>Phasianinae</taxon>
        <taxon>Gallus</taxon>
    </lineage>
</organism>